<dbReference type="EC" id="3.6.4.-" evidence="1"/>
<dbReference type="EMBL" id="CP000262">
    <property type="protein sequence ID" value="ABF36987.1"/>
    <property type="status" value="ALT_INIT"/>
    <property type="molecule type" value="Genomic_DNA"/>
</dbReference>
<dbReference type="SMR" id="Q1J924"/>
<dbReference type="KEGG" id="spi:MGAS10750_Spy0037"/>
<dbReference type="HOGENOM" id="CLU_055599_1_0_9"/>
<dbReference type="Proteomes" id="UP000002434">
    <property type="component" value="Chromosome"/>
</dbReference>
<dbReference type="GO" id="GO:0005737">
    <property type="term" value="C:cytoplasm"/>
    <property type="evidence" value="ECO:0007669"/>
    <property type="project" value="UniProtKB-SubCell"/>
</dbReference>
<dbReference type="GO" id="GO:0048476">
    <property type="term" value="C:Holliday junction resolvase complex"/>
    <property type="evidence" value="ECO:0007669"/>
    <property type="project" value="UniProtKB-UniRule"/>
</dbReference>
<dbReference type="GO" id="GO:0005524">
    <property type="term" value="F:ATP binding"/>
    <property type="evidence" value="ECO:0007669"/>
    <property type="project" value="UniProtKB-UniRule"/>
</dbReference>
<dbReference type="GO" id="GO:0016887">
    <property type="term" value="F:ATP hydrolysis activity"/>
    <property type="evidence" value="ECO:0007669"/>
    <property type="project" value="InterPro"/>
</dbReference>
<dbReference type="GO" id="GO:0000400">
    <property type="term" value="F:four-way junction DNA binding"/>
    <property type="evidence" value="ECO:0007669"/>
    <property type="project" value="UniProtKB-UniRule"/>
</dbReference>
<dbReference type="GO" id="GO:0009378">
    <property type="term" value="F:four-way junction helicase activity"/>
    <property type="evidence" value="ECO:0007669"/>
    <property type="project" value="InterPro"/>
</dbReference>
<dbReference type="GO" id="GO:0006310">
    <property type="term" value="P:DNA recombination"/>
    <property type="evidence" value="ECO:0007669"/>
    <property type="project" value="UniProtKB-UniRule"/>
</dbReference>
<dbReference type="GO" id="GO:0006281">
    <property type="term" value="P:DNA repair"/>
    <property type="evidence" value="ECO:0007669"/>
    <property type="project" value="UniProtKB-UniRule"/>
</dbReference>
<dbReference type="CDD" id="cd00009">
    <property type="entry name" value="AAA"/>
    <property type="match status" value="1"/>
</dbReference>
<dbReference type="Gene3D" id="1.10.8.60">
    <property type="match status" value="1"/>
</dbReference>
<dbReference type="Gene3D" id="3.40.50.300">
    <property type="entry name" value="P-loop containing nucleotide triphosphate hydrolases"/>
    <property type="match status" value="1"/>
</dbReference>
<dbReference type="Gene3D" id="1.10.10.10">
    <property type="entry name" value="Winged helix-like DNA-binding domain superfamily/Winged helix DNA-binding domain"/>
    <property type="match status" value="1"/>
</dbReference>
<dbReference type="HAMAP" id="MF_00016">
    <property type="entry name" value="DNA_HJ_migration_RuvB"/>
    <property type="match status" value="1"/>
</dbReference>
<dbReference type="InterPro" id="IPR003593">
    <property type="entry name" value="AAA+_ATPase"/>
</dbReference>
<dbReference type="InterPro" id="IPR041445">
    <property type="entry name" value="AAA_lid_4"/>
</dbReference>
<dbReference type="InterPro" id="IPR004605">
    <property type="entry name" value="DNA_helicase_Holl-junc_RuvB"/>
</dbReference>
<dbReference type="InterPro" id="IPR027417">
    <property type="entry name" value="P-loop_NTPase"/>
</dbReference>
<dbReference type="InterPro" id="IPR008824">
    <property type="entry name" value="RuvB-like_N"/>
</dbReference>
<dbReference type="InterPro" id="IPR008823">
    <property type="entry name" value="RuvB_C"/>
</dbReference>
<dbReference type="InterPro" id="IPR036388">
    <property type="entry name" value="WH-like_DNA-bd_sf"/>
</dbReference>
<dbReference type="InterPro" id="IPR036390">
    <property type="entry name" value="WH_DNA-bd_sf"/>
</dbReference>
<dbReference type="NCBIfam" id="NF000868">
    <property type="entry name" value="PRK00080.1"/>
    <property type="match status" value="1"/>
</dbReference>
<dbReference type="NCBIfam" id="TIGR00635">
    <property type="entry name" value="ruvB"/>
    <property type="match status" value="1"/>
</dbReference>
<dbReference type="PANTHER" id="PTHR42848">
    <property type="match status" value="1"/>
</dbReference>
<dbReference type="PANTHER" id="PTHR42848:SF1">
    <property type="entry name" value="HOLLIDAY JUNCTION BRANCH MIGRATION COMPLEX SUBUNIT RUVB"/>
    <property type="match status" value="1"/>
</dbReference>
<dbReference type="Pfam" id="PF17864">
    <property type="entry name" value="AAA_lid_4"/>
    <property type="match status" value="1"/>
</dbReference>
<dbReference type="Pfam" id="PF05491">
    <property type="entry name" value="RuvB_C"/>
    <property type="match status" value="1"/>
</dbReference>
<dbReference type="Pfam" id="PF05496">
    <property type="entry name" value="RuvB_N"/>
    <property type="match status" value="1"/>
</dbReference>
<dbReference type="SMART" id="SM00382">
    <property type="entry name" value="AAA"/>
    <property type="match status" value="1"/>
</dbReference>
<dbReference type="SUPFAM" id="SSF52540">
    <property type="entry name" value="P-loop containing nucleoside triphosphate hydrolases"/>
    <property type="match status" value="1"/>
</dbReference>
<dbReference type="SUPFAM" id="SSF46785">
    <property type="entry name" value="Winged helix' DNA-binding domain"/>
    <property type="match status" value="1"/>
</dbReference>
<organism>
    <name type="scientific">Streptococcus pyogenes serotype M4 (strain MGAS10750)</name>
    <dbReference type="NCBI Taxonomy" id="370554"/>
    <lineage>
        <taxon>Bacteria</taxon>
        <taxon>Bacillati</taxon>
        <taxon>Bacillota</taxon>
        <taxon>Bacilli</taxon>
        <taxon>Lactobacillales</taxon>
        <taxon>Streptococcaceae</taxon>
        <taxon>Streptococcus</taxon>
    </lineage>
</organism>
<feature type="chain" id="PRO_0000322844" description="Holliday junction branch migration complex subunit RuvB">
    <location>
        <begin position="1"/>
        <end position="332"/>
    </location>
</feature>
<feature type="region of interest" description="Large ATPase domain (RuvB-L)" evidence="1">
    <location>
        <begin position="1"/>
        <end position="181"/>
    </location>
</feature>
<feature type="region of interest" description="Small ATPAse domain (RuvB-S)" evidence="1">
    <location>
        <begin position="182"/>
        <end position="252"/>
    </location>
</feature>
<feature type="region of interest" description="Head domain (RuvB-H)" evidence="1">
    <location>
        <begin position="255"/>
        <end position="332"/>
    </location>
</feature>
<feature type="binding site" evidence="1">
    <location>
        <position position="20"/>
    </location>
    <ligand>
        <name>ATP</name>
        <dbReference type="ChEBI" id="CHEBI:30616"/>
    </ligand>
</feature>
<feature type="binding site" evidence="1">
    <location>
        <position position="21"/>
    </location>
    <ligand>
        <name>ATP</name>
        <dbReference type="ChEBI" id="CHEBI:30616"/>
    </ligand>
</feature>
<feature type="binding site" evidence="1">
    <location>
        <position position="62"/>
    </location>
    <ligand>
        <name>ATP</name>
        <dbReference type="ChEBI" id="CHEBI:30616"/>
    </ligand>
</feature>
<feature type="binding site" evidence="1">
    <location>
        <position position="65"/>
    </location>
    <ligand>
        <name>ATP</name>
        <dbReference type="ChEBI" id="CHEBI:30616"/>
    </ligand>
</feature>
<feature type="binding site" evidence="1">
    <location>
        <position position="66"/>
    </location>
    <ligand>
        <name>ATP</name>
        <dbReference type="ChEBI" id="CHEBI:30616"/>
    </ligand>
</feature>
<feature type="binding site" evidence="1">
    <location>
        <position position="66"/>
    </location>
    <ligand>
        <name>Mg(2+)</name>
        <dbReference type="ChEBI" id="CHEBI:18420"/>
    </ligand>
</feature>
<feature type="binding site" evidence="1">
    <location>
        <position position="67"/>
    </location>
    <ligand>
        <name>ATP</name>
        <dbReference type="ChEBI" id="CHEBI:30616"/>
    </ligand>
</feature>
<feature type="binding site" evidence="1">
    <location>
        <begin position="128"/>
        <end position="130"/>
    </location>
    <ligand>
        <name>ATP</name>
        <dbReference type="ChEBI" id="CHEBI:30616"/>
    </ligand>
</feature>
<feature type="binding site" evidence="1">
    <location>
        <position position="171"/>
    </location>
    <ligand>
        <name>ATP</name>
        <dbReference type="ChEBI" id="CHEBI:30616"/>
    </ligand>
</feature>
<feature type="binding site" evidence="1">
    <location>
        <position position="181"/>
    </location>
    <ligand>
        <name>ATP</name>
        <dbReference type="ChEBI" id="CHEBI:30616"/>
    </ligand>
</feature>
<feature type="binding site" evidence="1">
    <location>
        <position position="218"/>
    </location>
    <ligand>
        <name>ATP</name>
        <dbReference type="ChEBI" id="CHEBI:30616"/>
    </ligand>
</feature>
<feature type="binding site" evidence="1">
    <location>
        <position position="291"/>
    </location>
    <ligand>
        <name>DNA</name>
        <dbReference type="ChEBI" id="CHEBI:16991"/>
    </ligand>
</feature>
<feature type="binding site" evidence="1">
    <location>
        <position position="310"/>
    </location>
    <ligand>
        <name>DNA</name>
        <dbReference type="ChEBI" id="CHEBI:16991"/>
    </ligand>
</feature>
<feature type="binding site" evidence="1">
    <location>
        <position position="312"/>
    </location>
    <ligand>
        <name>DNA</name>
        <dbReference type="ChEBI" id="CHEBI:16991"/>
    </ligand>
</feature>
<feature type="binding site" evidence="1">
    <location>
        <position position="315"/>
    </location>
    <ligand>
        <name>DNA</name>
        <dbReference type="ChEBI" id="CHEBI:16991"/>
    </ligand>
</feature>
<accession>Q1J924</accession>
<protein>
    <recommendedName>
        <fullName evidence="1">Holliday junction branch migration complex subunit RuvB</fullName>
        <ecNumber evidence="1">3.6.4.-</ecNumber>
    </recommendedName>
</protein>
<reference key="1">
    <citation type="journal article" date="2006" name="Proc. Natl. Acad. Sci. U.S.A.">
        <title>Molecular genetic anatomy of inter- and intraserotype variation in the human bacterial pathogen group A Streptococcus.</title>
        <authorList>
            <person name="Beres S.B."/>
            <person name="Richter E.W."/>
            <person name="Nagiec M.J."/>
            <person name="Sumby P."/>
            <person name="Porcella S.F."/>
            <person name="DeLeo F.R."/>
            <person name="Musser J.M."/>
        </authorList>
    </citation>
    <scope>NUCLEOTIDE SEQUENCE [LARGE SCALE GENOMIC DNA]</scope>
    <source>
        <strain>MGAS10750</strain>
    </source>
</reference>
<name>RUVB_STRPF</name>
<sequence length="332" mass="37565">MARILDNNVMGNEEFSDRTLRPQYLHEYIGQDKVKEQFAIFIEAAKRRDESLDHVLLFGPPGLGKTTMAFVIANELGVNLKQTSGPAVEKAGDLVAILNELEPGDILFIDEIHRMPMSVEEVLYSAMEDFYIDIMIGAGDTSRSIHLDLPPFTLIGATTRAGMLSNPLRARFGITGHMEYYQEKDLTEIVERTATIFEIKIDHEAARKLACRSRGTPRIANRLLKRVRDYAQIIGDGIITAQITDRALTMLDVDREGLDYIDQKILRTMIEMYQGGPVGLGTLSVNIAEERNTVEEMYEPYLIQKGFLMRTRTGRVATQKAYRHLGYPYQNT</sequence>
<proteinExistence type="inferred from homology"/>
<comment type="function">
    <text evidence="1">The RuvA-RuvB-RuvC complex processes Holliday junction (HJ) DNA during genetic recombination and DNA repair, while the RuvA-RuvB complex plays an important role in the rescue of blocked DNA replication forks via replication fork reversal (RFR). RuvA specifically binds to HJ cruciform DNA, conferring on it an open structure. The RuvB hexamer acts as an ATP-dependent pump, pulling dsDNA into and through the RuvAB complex. RuvB forms 2 homohexamers on either side of HJ DNA bound by 1 or 2 RuvA tetramers; 4 subunits per hexamer contact DNA at a time. Coordinated motions by a converter formed by DNA-disengaged RuvB subunits stimulates ATP hydrolysis and nucleotide exchange. Immobilization of the converter enables RuvB to convert the ATP-contained energy into a lever motion, pulling 2 nucleotides of DNA out of the RuvA tetramer per ATP hydrolyzed, thus driving DNA branch migration. The RuvB motors rotate together with the DNA substrate, which together with the progressing nucleotide cycle form the mechanistic basis for DNA recombination by continuous HJ branch migration. Branch migration allows RuvC to scan DNA until it finds its consensus sequence, where it cleaves and resolves cruciform DNA.</text>
</comment>
<comment type="catalytic activity">
    <reaction evidence="1">
        <text>ATP + H2O = ADP + phosphate + H(+)</text>
        <dbReference type="Rhea" id="RHEA:13065"/>
        <dbReference type="ChEBI" id="CHEBI:15377"/>
        <dbReference type="ChEBI" id="CHEBI:15378"/>
        <dbReference type="ChEBI" id="CHEBI:30616"/>
        <dbReference type="ChEBI" id="CHEBI:43474"/>
        <dbReference type="ChEBI" id="CHEBI:456216"/>
    </reaction>
</comment>
<comment type="subunit">
    <text evidence="1">Homohexamer. Forms an RuvA(8)-RuvB(12)-Holliday junction (HJ) complex. HJ DNA is sandwiched between 2 RuvA tetramers; dsDNA enters through RuvA and exits via RuvB. An RuvB hexamer assembles on each DNA strand where it exits the tetramer. Each RuvB hexamer is contacted by two RuvA subunits (via domain III) on 2 adjacent RuvB subunits; this complex drives branch migration. In the full resolvosome a probable DNA-RuvA(4)-RuvB(12)-RuvC(2) complex forms which resolves the HJ.</text>
</comment>
<comment type="subcellular location">
    <subcellularLocation>
        <location evidence="1">Cytoplasm</location>
    </subcellularLocation>
</comment>
<comment type="domain">
    <text evidence="1">Has 3 domains, the large (RuvB-L) and small ATPase (RuvB-S) domains and the C-terminal head (RuvB-H) domain. The head domain binds DNA, while the ATPase domains jointly bind ATP, ADP or are empty depending on the state of the subunit in the translocation cycle. During a single DNA translocation step the structure of each domain remains the same, but their relative positions change.</text>
</comment>
<comment type="similarity">
    <text evidence="1">Belongs to the RuvB family.</text>
</comment>
<comment type="sequence caution" evidence="2">
    <conflict type="erroneous initiation">
        <sequence resource="EMBL-CDS" id="ABF36987"/>
    </conflict>
</comment>
<keyword id="KW-0067">ATP-binding</keyword>
<keyword id="KW-0963">Cytoplasm</keyword>
<keyword id="KW-0227">DNA damage</keyword>
<keyword id="KW-0233">DNA recombination</keyword>
<keyword id="KW-0234">DNA repair</keyword>
<keyword id="KW-0238">DNA-binding</keyword>
<keyword id="KW-0378">Hydrolase</keyword>
<keyword id="KW-0547">Nucleotide-binding</keyword>
<gene>
    <name evidence="1" type="primary">ruvB</name>
    <name type="ordered locus">MGAS10750_Spy0037</name>
</gene>
<evidence type="ECO:0000255" key="1">
    <source>
        <dbReference type="HAMAP-Rule" id="MF_00016"/>
    </source>
</evidence>
<evidence type="ECO:0000305" key="2"/>